<name>RL35_METNO</name>
<proteinExistence type="inferred from homology"/>
<keyword id="KW-1185">Reference proteome</keyword>
<keyword id="KW-0687">Ribonucleoprotein</keyword>
<keyword id="KW-0689">Ribosomal protein</keyword>
<protein>
    <recommendedName>
        <fullName evidence="1">Large ribosomal subunit protein bL35</fullName>
    </recommendedName>
    <alternativeName>
        <fullName evidence="2">50S ribosomal protein L35</fullName>
    </alternativeName>
</protein>
<feature type="chain" id="PRO_1000194081" description="Large ribosomal subunit protein bL35">
    <location>
        <begin position="1"/>
        <end position="66"/>
    </location>
</feature>
<gene>
    <name evidence="1" type="primary">rpmI</name>
    <name type="ordered locus">Mnod_5554</name>
</gene>
<reference key="1">
    <citation type="submission" date="2009-01" db="EMBL/GenBank/DDBJ databases">
        <title>Complete sequence of chromosome of Methylobacterium nodulans ORS 2060.</title>
        <authorList>
            <consortium name="US DOE Joint Genome Institute"/>
            <person name="Lucas S."/>
            <person name="Copeland A."/>
            <person name="Lapidus A."/>
            <person name="Glavina del Rio T."/>
            <person name="Dalin E."/>
            <person name="Tice H."/>
            <person name="Bruce D."/>
            <person name="Goodwin L."/>
            <person name="Pitluck S."/>
            <person name="Sims D."/>
            <person name="Brettin T."/>
            <person name="Detter J.C."/>
            <person name="Han C."/>
            <person name="Larimer F."/>
            <person name="Land M."/>
            <person name="Hauser L."/>
            <person name="Kyrpides N."/>
            <person name="Ivanova N."/>
            <person name="Marx C.J."/>
            <person name="Richardson P."/>
        </authorList>
    </citation>
    <scope>NUCLEOTIDE SEQUENCE [LARGE SCALE GENOMIC DNA]</scope>
    <source>
        <strain>LMG 21967 / CNCM I-2342 / ORS 2060</strain>
    </source>
</reference>
<accession>B8IP78</accession>
<comment type="similarity">
    <text evidence="1">Belongs to the bacterial ribosomal protein bL35 family.</text>
</comment>
<dbReference type="EMBL" id="CP001349">
    <property type="protein sequence ID" value="ACL60396.1"/>
    <property type="molecule type" value="Genomic_DNA"/>
</dbReference>
<dbReference type="RefSeq" id="WP_012335024.1">
    <property type="nucleotide sequence ID" value="NC_011894.1"/>
</dbReference>
<dbReference type="SMR" id="B8IP78"/>
<dbReference type="STRING" id="460265.Mnod_5554"/>
<dbReference type="KEGG" id="mno:Mnod_5554"/>
<dbReference type="eggNOG" id="COG0291">
    <property type="taxonomic scope" value="Bacteria"/>
</dbReference>
<dbReference type="HOGENOM" id="CLU_169643_2_1_5"/>
<dbReference type="OrthoDB" id="9804851at2"/>
<dbReference type="Proteomes" id="UP000008207">
    <property type="component" value="Chromosome"/>
</dbReference>
<dbReference type="GO" id="GO:0022625">
    <property type="term" value="C:cytosolic large ribosomal subunit"/>
    <property type="evidence" value="ECO:0007669"/>
    <property type="project" value="TreeGrafter"/>
</dbReference>
<dbReference type="GO" id="GO:0003735">
    <property type="term" value="F:structural constituent of ribosome"/>
    <property type="evidence" value="ECO:0007669"/>
    <property type="project" value="InterPro"/>
</dbReference>
<dbReference type="GO" id="GO:0006412">
    <property type="term" value="P:translation"/>
    <property type="evidence" value="ECO:0007669"/>
    <property type="project" value="UniProtKB-UniRule"/>
</dbReference>
<dbReference type="FunFam" id="4.10.410.60:FF:000001">
    <property type="entry name" value="50S ribosomal protein L35"/>
    <property type="match status" value="1"/>
</dbReference>
<dbReference type="Gene3D" id="4.10.410.60">
    <property type="match status" value="1"/>
</dbReference>
<dbReference type="HAMAP" id="MF_00514">
    <property type="entry name" value="Ribosomal_bL35"/>
    <property type="match status" value="1"/>
</dbReference>
<dbReference type="InterPro" id="IPR001706">
    <property type="entry name" value="Ribosomal_bL35"/>
</dbReference>
<dbReference type="InterPro" id="IPR021137">
    <property type="entry name" value="Ribosomal_bL35-like"/>
</dbReference>
<dbReference type="InterPro" id="IPR018265">
    <property type="entry name" value="Ribosomal_bL35_CS"/>
</dbReference>
<dbReference type="InterPro" id="IPR037229">
    <property type="entry name" value="Ribosomal_bL35_sf"/>
</dbReference>
<dbReference type="NCBIfam" id="TIGR00001">
    <property type="entry name" value="rpmI_bact"/>
    <property type="match status" value="1"/>
</dbReference>
<dbReference type="PANTHER" id="PTHR33343">
    <property type="entry name" value="54S RIBOSOMAL PROTEIN BL35M"/>
    <property type="match status" value="1"/>
</dbReference>
<dbReference type="PANTHER" id="PTHR33343:SF1">
    <property type="entry name" value="LARGE RIBOSOMAL SUBUNIT PROTEIN BL35M"/>
    <property type="match status" value="1"/>
</dbReference>
<dbReference type="Pfam" id="PF01632">
    <property type="entry name" value="Ribosomal_L35p"/>
    <property type="match status" value="1"/>
</dbReference>
<dbReference type="PRINTS" id="PR00064">
    <property type="entry name" value="RIBOSOMALL35"/>
</dbReference>
<dbReference type="SUPFAM" id="SSF143034">
    <property type="entry name" value="L35p-like"/>
    <property type="match status" value="1"/>
</dbReference>
<dbReference type="PROSITE" id="PS00936">
    <property type="entry name" value="RIBOSOMAL_L35"/>
    <property type="match status" value="1"/>
</dbReference>
<evidence type="ECO:0000255" key="1">
    <source>
        <dbReference type="HAMAP-Rule" id="MF_00514"/>
    </source>
</evidence>
<evidence type="ECO:0000305" key="2"/>
<organism>
    <name type="scientific">Methylobacterium nodulans (strain LMG 21967 / CNCM I-2342 / ORS 2060)</name>
    <dbReference type="NCBI Taxonomy" id="460265"/>
    <lineage>
        <taxon>Bacteria</taxon>
        <taxon>Pseudomonadati</taxon>
        <taxon>Pseudomonadota</taxon>
        <taxon>Alphaproteobacteria</taxon>
        <taxon>Hyphomicrobiales</taxon>
        <taxon>Methylobacteriaceae</taxon>
        <taxon>Methylobacterium</taxon>
    </lineage>
</organism>
<sequence>MPKLKTKSGAKKRFKITGTGKVLYAQAGKRHGMIKRTTKQIRNLRGTTTLFEGDAANVKKFFLPNG</sequence>